<evidence type="ECO:0000250" key="1">
    <source>
        <dbReference type="UniProtKB" id="O53512"/>
    </source>
</evidence>
<evidence type="ECO:0000255" key="2"/>
<evidence type="ECO:0000256" key="3">
    <source>
        <dbReference type="SAM" id="MobiDB-lite"/>
    </source>
</evidence>
<evidence type="ECO:0000269" key="4">
    <source>
    </source>
</evidence>
<evidence type="ECO:0000303" key="5">
    <source>
    </source>
</evidence>
<evidence type="ECO:0000305" key="6"/>
<reference key="1">
    <citation type="journal article" date="2014" name="Phytochemistry">
        <title>PhDAHP1 is required for floral volatile benzenoid/phenylpropanoid biosynthesis in Petunia x hybrida cv 'Mitchell Diploid'.</title>
        <authorList>
            <person name="Langer K.M."/>
            <person name="Jones C.R."/>
            <person name="Jaworski E.A."/>
            <person name="Rushing G.V."/>
            <person name="Kim J.Y."/>
            <person name="Clark D.G."/>
            <person name="Colquhoun T.A."/>
        </authorList>
    </citation>
    <scope>NUCLEOTIDE SEQUENCE [MRNA]</scope>
    <scope>FUNCTION</scope>
    <scope>DISRUPTION PHENOTYPE</scope>
    <scope>TISSUE SPECIFICITY</scope>
    <scope>DEVELOPMENTAL STAGE</scope>
    <scope>SUBCELLULAR LOCATION</scope>
    <source>
        <strain>cv. Mitchell</strain>
        <tissue>Corolla</tissue>
        <tissue>Leaf</tissue>
    </source>
</reference>
<comment type="function">
    <text evidence="1 4">Involved in the production of volatile organic compounds (VOCs) (PubMed:24815009). Catalyzes an aldol-like condensation reaction between phosphoenolpyruvate (PEP) and D-erythrose 4-phosphate (E4P) to generate 3-deoxy-D-arabino-heptulosonate 7-phosphate (DAH7P) and inorganic phosphate (By similarity).</text>
</comment>
<comment type="catalytic activity">
    <reaction evidence="1">
        <text>D-erythrose 4-phosphate + phosphoenolpyruvate + H2O = 7-phospho-2-dehydro-3-deoxy-D-arabino-heptonate + phosphate</text>
        <dbReference type="Rhea" id="RHEA:14717"/>
        <dbReference type="ChEBI" id="CHEBI:15377"/>
        <dbReference type="ChEBI" id="CHEBI:16897"/>
        <dbReference type="ChEBI" id="CHEBI:43474"/>
        <dbReference type="ChEBI" id="CHEBI:58394"/>
        <dbReference type="ChEBI" id="CHEBI:58702"/>
        <dbReference type="EC" id="2.5.1.54"/>
    </reaction>
</comment>
<comment type="cofactor">
    <cofactor evidence="1">
        <name>Mn(2+)</name>
        <dbReference type="ChEBI" id="CHEBI:29035"/>
    </cofactor>
    <text evidence="1">Binds 1 divalent metal cation per subunit that could be manganese.</text>
</comment>
<comment type="pathway">
    <text evidence="1">Metabolic intermediate biosynthesis; chorismate biosynthesis; chorismate from D-erythrose 4-phosphate and phosphoenolpyruvate: step 1/7.</text>
</comment>
<comment type="subunit">
    <text evidence="1">Homodimer.</text>
</comment>
<comment type="subcellular location">
    <subcellularLocation>
        <location evidence="4">Plastid</location>
        <location evidence="4">Chloroplast</location>
    </subcellularLocation>
</comment>
<comment type="tissue specificity">
    <text evidence="4">Mostly expressed in leaves and stems, and, to a lower extent, in roots, stigmas, anthers, petal tubes, petal limbs and sepals.</text>
</comment>
<comment type="developmental stage">
    <text evidence="4">During floral development, expressed constitutively.</text>
</comment>
<comment type="disruption phenotype">
    <text evidence="4">Normal floral volatile benzenoids and phenylpropanoids (FVBP) emission.</text>
</comment>
<comment type="similarity">
    <text evidence="6">Belongs to the class-II DAHP synthase family.</text>
</comment>
<sequence length="512" mass="57062">MALTATATTRGGSALPNSCLQTPKFQSLQKPTFISSFPTNKKTKPRTKHISAVQSPPSTTKWNLESWKTKPAFQLPDYPDKVELESVLKTLSTYPPIVFAGEARNLEEKLGEAALGNAFLLQGGDCAESFKEFSANNIRDTFRVMLQMGVVLMFGGQMPVIKVGRMAGQFAKPRSDPFEEKDGVKLPSYRGDNVNGDAFDEKSRIPDPHRMVRAYTQSVATLNLLRAFASGGYAAMQRVNQWNLDFTDQSEQGDRYRELAHRVDEAMGFMTAAGLTVDHTIMTTTDFWTSHECLLLPYEQALTREDSTSGLYYDCSAHMIWVGERTRQLDGAHVEFLRGIANPLGIKVSHKMDPDELVKLIDILNPQNKPGRITVITRMGADNMRVKLPHLIRAVRGAGQIVTWVSDPMHGNTTKAPCGLKTRSFDSIRAELRAFFDVHEQEGSYPGGVHLEMTGQNVTECVGGSRTITYNDLSSRYHTHCDPRLNASQALELAFAIAERLRRRRLGPKFSL</sequence>
<feature type="transit peptide" description="Chloroplast" evidence="2">
    <location>
        <begin position="1"/>
        <end position="57"/>
    </location>
</feature>
<feature type="chain" id="PRO_0000451510" description="Phospho-2-dehydro-3-deoxyheptonate aldolase 2, chloroplastic">
    <location>
        <begin position="58"/>
        <end position="512"/>
    </location>
</feature>
<feature type="region of interest" description="Disordered" evidence="3">
    <location>
        <begin position="37"/>
        <end position="57"/>
    </location>
</feature>
<feature type="binding site" evidence="1">
    <location>
        <position position="126"/>
    </location>
    <ligand>
        <name>Mn(2+)</name>
        <dbReference type="ChEBI" id="CHEBI:29035"/>
    </ligand>
</feature>
<feature type="binding site" evidence="1">
    <location>
        <position position="165"/>
    </location>
    <ligand>
        <name>substrate</name>
    </ligand>
</feature>
<feature type="binding site" evidence="1">
    <location>
        <begin position="324"/>
        <end position="325"/>
    </location>
    <ligand>
        <name>substrate</name>
    </ligand>
</feature>
<feature type="binding site" evidence="1">
    <location>
        <position position="347"/>
    </location>
    <ligand>
        <name>substrate</name>
    </ligand>
</feature>
<feature type="binding site" evidence="1">
    <location>
        <position position="378"/>
    </location>
    <ligand>
        <name>substrate</name>
    </ligand>
</feature>
<feature type="binding site" evidence="1">
    <location>
        <position position="410"/>
    </location>
    <ligand>
        <name>Mn(2+)</name>
        <dbReference type="ChEBI" id="CHEBI:29035"/>
    </ligand>
</feature>
<feature type="binding site" evidence="1">
    <location>
        <position position="452"/>
    </location>
    <ligand>
        <name>Mn(2+)</name>
        <dbReference type="ChEBI" id="CHEBI:29035"/>
    </ligand>
</feature>
<feature type="binding site" evidence="1">
    <location>
        <position position="482"/>
    </location>
    <ligand>
        <name>Mn(2+)</name>
        <dbReference type="ChEBI" id="CHEBI:29035"/>
    </ligand>
</feature>
<protein>
    <recommendedName>
        <fullName evidence="6">Phospho-2-dehydro-3-deoxyheptonate aldolase 2, chloroplastic</fullName>
        <ecNumber evidence="1">2.5.1.54</ecNumber>
    </recommendedName>
    <alternativeName>
        <fullName evidence="5">3-deoxy-D-arabino-heptulosonate 7-phosphate synthase 2</fullName>
        <shortName evidence="6">DAHP synthase 2</shortName>
        <shortName evidence="5">PhDAHP2</shortName>
    </alternativeName>
    <alternativeName>
        <fullName evidence="6">Phospho-2-keto-3-deoxyheptonate aldolase 2</fullName>
    </alternativeName>
</protein>
<name>AROG2_PETHY</name>
<organism>
    <name type="scientific">Petunia hybrida</name>
    <name type="common">Petunia</name>
    <dbReference type="NCBI Taxonomy" id="4102"/>
    <lineage>
        <taxon>Eukaryota</taxon>
        <taxon>Viridiplantae</taxon>
        <taxon>Streptophyta</taxon>
        <taxon>Embryophyta</taxon>
        <taxon>Tracheophyta</taxon>
        <taxon>Spermatophyta</taxon>
        <taxon>Magnoliopsida</taxon>
        <taxon>eudicotyledons</taxon>
        <taxon>Gunneridae</taxon>
        <taxon>Pentapetalae</taxon>
        <taxon>asterids</taxon>
        <taxon>lamiids</taxon>
        <taxon>Solanales</taxon>
        <taxon>Solanaceae</taxon>
        <taxon>Petunioideae</taxon>
        <taxon>Petunia</taxon>
    </lineage>
</organism>
<proteinExistence type="evidence at transcript level"/>
<dbReference type="EC" id="2.5.1.54" evidence="1"/>
<dbReference type="EMBL" id="JQ955570">
    <property type="protein sequence ID" value="AFL02468.1"/>
    <property type="molecule type" value="mRNA"/>
</dbReference>
<dbReference type="SMR" id="A0A067XGX8"/>
<dbReference type="UniPathway" id="UPA00053">
    <property type="reaction ID" value="UER00084"/>
</dbReference>
<dbReference type="GO" id="GO:0009507">
    <property type="term" value="C:chloroplast"/>
    <property type="evidence" value="ECO:0000314"/>
    <property type="project" value="UniProtKB"/>
</dbReference>
<dbReference type="GO" id="GO:0003849">
    <property type="term" value="F:3-deoxy-7-phosphoheptulonate synthase activity"/>
    <property type="evidence" value="ECO:0007669"/>
    <property type="project" value="UniProtKB-EC"/>
</dbReference>
<dbReference type="GO" id="GO:0046872">
    <property type="term" value="F:metal ion binding"/>
    <property type="evidence" value="ECO:0007669"/>
    <property type="project" value="UniProtKB-KW"/>
</dbReference>
<dbReference type="GO" id="GO:0008652">
    <property type="term" value="P:amino acid biosynthetic process"/>
    <property type="evidence" value="ECO:0007669"/>
    <property type="project" value="UniProtKB-KW"/>
</dbReference>
<dbReference type="GO" id="GO:0009073">
    <property type="term" value="P:aromatic amino acid family biosynthetic process"/>
    <property type="evidence" value="ECO:0007669"/>
    <property type="project" value="UniProtKB-KW"/>
</dbReference>
<dbReference type="GO" id="GO:0009423">
    <property type="term" value="P:chorismate biosynthetic process"/>
    <property type="evidence" value="ECO:0007669"/>
    <property type="project" value="UniProtKB-UniPathway"/>
</dbReference>
<dbReference type="FunFam" id="3.20.20.70:FF:000128">
    <property type="entry name" value="Phospho-2-dehydro-3-deoxyheptonate aldolase"/>
    <property type="match status" value="1"/>
</dbReference>
<dbReference type="Gene3D" id="3.20.20.70">
    <property type="entry name" value="Aldolase class I"/>
    <property type="match status" value="2"/>
</dbReference>
<dbReference type="InterPro" id="IPR013785">
    <property type="entry name" value="Aldolase_TIM"/>
</dbReference>
<dbReference type="InterPro" id="IPR002480">
    <property type="entry name" value="DAHP_synth_2"/>
</dbReference>
<dbReference type="NCBIfam" id="TIGR01358">
    <property type="entry name" value="DAHP_synth_II"/>
    <property type="match status" value="1"/>
</dbReference>
<dbReference type="PANTHER" id="PTHR21337">
    <property type="entry name" value="PHOSPHO-2-DEHYDRO-3-DEOXYHEPTONATE ALDOLASE 1, 2"/>
    <property type="match status" value="1"/>
</dbReference>
<dbReference type="PANTHER" id="PTHR21337:SF28">
    <property type="entry name" value="PHOSPHO-2-DEHYDRO-3-DEOXYHEPTONATE ALDOLASE 2, CHLOROPLASTIC"/>
    <property type="match status" value="1"/>
</dbReference>
<dbReference type="Pfam" id="PF01474">
    <property type="entry name" value="DAHP_synth_2"/>
    <property type="match status" value="1"/>
</dbReference>
<dbReference type="SUPFAM" id="SSF51569">
    <property type="entry name" value="Aldolase"/>
    <property type="match status" value="1"/>
</dbReference>
<keyword id="KW-0028">Amino-acid biosynthesis</keyword>
<keyword id="KW-0057">Aromatic amino acid biosynthesis</keyword>
<keyword id="KW-0150">Chloroplast</keyword>
<keyword id="KW-0464">Manganese</keyword>
<keyword id="KW-0479">Metal-binding</keyword>
<keyword id="KW-0934">Plastid</keyword>
<keyword id="KW-0808">Transferase</keyword>
<keyword id="KW-0809">Transit peptide</keyword>
<accession>A0A067XGX8</accession>
<gene>
    <name evidence="5" type="primary">DAHP2</name>
    <name evidence="5" type="synonym">DHS2</name>
</gene>